<name>BCD1_PONAB</name>
<feature type="chain" id="PRO_0000280241" description="Box C/D snoRNA protein 1">
    <location>
        <begin position="1"/>
        <end position="465"/>
    </location>
</feature>
<feature type="zinc finger region" description="HIT-type" evidence="2">
    <location>
        <begin position="215"/>
        <end position="249"/>
    </location>
</feature>
<feature type="region of interest" description="Disordered" evidence="3">
    <location>
        <begin position="1"/>
        <end position="72"/>
    </location>
</feature>
<feature type="compositionally biased region" description="Basic and acidic residues" evidence="3">
    <location>
        <begin position="56"/>
        <end position="70"/>
    </location>
</feature>
<feature type="binding site" evidence="2">
    <location>
        <position position="215"/>
    </location>
    <ligand>
        <name>Zn(2+)</name>
        <dbReference type="ChEBI" id="CHEBI:29105"/>
        <label>1</label>
    </ligand>
</feature>
<feature type="binding site" evidence="2">
    <location>
        <position position="218"/>
    </location>
    <ligand>
        <name>Zn(2+)</name>
        <dbReference type="ChEBI" id="CHEBI:29105"/>
        <label>1</label>
    </ligand>
</feature>
<feature type="binding site" evidence="2">
    <location>
        <position position="227"/>
    </location>
    <ligand>
        <name>Zn(2+)</name>
        <dbReference type="ChEBI" id="CHEBI:29105"/>
        <label>2</label>
    </ligand>
</feature>
<feature type="binding site" evidence="2">
    <location>
        <position position="230"/>
    </location>
    <ligand>
        <name>Zn(2+)</name>
        <dbReference type="ChEBI" id="CHEBI:29105"/>
        <label>2</label>
    </ligand>
</feature>
<feature type="binding site" evidence="2">
    <location>
        <position position="235"/>
    </location>
    <ligand>
        <name>Zn(2+)</name>
        <dbReference type="ChEBI" id="CHEBI:29105"/>
        <label>1</label>
    </ligand>
</feature>
<feature type="binding site" evidence="2">
    <location>
        <position position="239"/>
    </location>
    <ligand>
        <name>Zn(2+)</name>
        <dbReference type="ChEBI" id="CHEBI:29105"/>
        <label>1</label>
    </ligand>
</feature>
<feature type="binding site" evidence="2">
    <location>
        <position position="243"/>
    </location>
    <ligand>
        <name>Zn(2+)</name>
        <dbReference type="ChEBI" id="CHEBI:29105"/>
        <label>2</label>
    </ligand>
</feature>
<feature type="binding site" evidence="2">
    <location>
        <position position="249"/>
    </location>
    <ligand>
        <name>Zn(2+)</name>
        <dbReference type="ChEBI" id="CHEBI:29105"/>
        <label>2</label>
    </ligand>
</feature>
<feature type="modified residue" description="Phosphoserine" evidence="1">
    <location>
        <position position="25"/>
    </location>
</feature>
<feature type="cross-link" description="Glycyl lysine isopeptide (Lys-Gly) (interchain with G-Cter in SUMO2)" evidence="1">
    <location>
        <position position="79"/>
    </location>
</feature>
<feature type="cross-link" description="Glycyl lysine isopeptide (Lys-Gly) (interchain with G-Cter in SUMO2)" evidence="1">
    <location>
        <position position="108"/>
    </location>
</feature>
<feature type="cross-link" description="Glycyl lysine isopeptide (Lys-Gly) (interchain with G-Cter in SUMO2)" evidence="1">
    <location>
        <position position="118"/>
    </location>
</feature>
<feature type="cross-link" description="Glycyl lysine isopeptide (Lys-Gly) (interchain with G-Cter in SUMO2)" evidence="1">
    <location>
        <position position="138"/>
    </location>
</feature>
<feature type="cross-link" description="Glycyl lysine isopeptide (Lys-Gly) (interchain with G-Cter in SUMO2)" evidence="1">
    <location>
        <position position="148"/>
    </location>
</feature>
<feature type="cross-link" description="Glycyl lysine isopeptide (Lys-Gly) (interchain with G-Cter in SUMO2)" evidence="1">
    <location>
        <position position="157"/>
    </location>
</feature>
<feature type="cross-link" description="Glycyl lysine isopeptide (Lys-Gly) (interchain with G-Cter in SUMO2)" evidence="1">
    <location>
        <position position="168"/>
    </location>
</feature>
<feature type="cross-link" description="Glycyl lysine isopeptide (Lys-Gly) (interchain with G-Cter in SUMO2)" evidence="1">
    <location>
        <position position="178"/>
    </location>
</feature>
<feature type="cross-link" description="Glycyl lysine isopeptide (Lys-Gly) (interchain with G-Cter in SUMO2)" evidence="1">
    <location>
        <position position="195"/>
    </location>
</feature>
<feature type="cross-link" description="Glycyl lysine isopeptide (Lys-Gly) (interchain with G-Cter in SUMO2)" evidence="1">
    <location>
        <position position="454"/>
    </location>
</feature>
<protein>
    <recommendedName>
        <fullName>Box C/D snoRNA protein 1</fullName>
    </recommendedName>
    <alternativeName>
        <fullName>Zinc finger HIT domain-containing protein 6</fullName>
    </alternativeName>
</protein>
<dbReference type="EMBL" id="CR857264">
    <property type="protein sequence ID" value="CAH89560.1"/>
    <property type="molecule type" value="mRNA"/>
</dbReference>
<dbReference type="RefSeq" id="NP_001124682.1">
    <property type="nucleotide sequence ID" value="NM_001131210.1"/>
</dbReference>
<dbReference type="SMR" id="Q5RF97"/>
<dbReference type="FunCoup" id="Q5RF97">
    <property type="interactions" value="1669"/>
</dbReference>
<dbReference type="STRING" id="9601.ENSPPYP00000001381"/>
<dbReference type="GeneID" id="100171529"/>
<dbReference type="KEGG" id="pon:100171529"/>
<dbReference type="CTD" id="54680"/>
<dbReference type="eggNOG" id="KOG2858">
    <property type="taxonomic scope" value="Eukaryota"/>
</dbReference>
<dbReference type="InParanoid" id="Q5RF97"/>
<dbReference type="OrthoDB" id="272357at2759"/>
<dbReference type="Proteomes" id="UP000001595">
    <property type="component" value="Unplaced"/>
</dbReference>
<dbReference type="GO" id="GO:0005634">
    <property type="term" value="C:nucleus"/>
    <property type="evidence" value="ECO:0007669"/>
    <property type="project" value="TreeGrafter"/>
</dbReference>
<dbReference type="GO" id="GO:0070761">
    <property type="term" value="C:pre-snoRNP complex"/>
    <property type="evidence" value="ECO:0007669"/>
    <property type="project" value="TreeGrafter"/>
</dbReference>
<dbReference type="GO" id="GO:0008270">
    <property type="term" value="F:zinc ion binding"/>
    <property type="evidence" value="ECO:0007669"/>
    <property type="project" value="UniProtKB-KW"/>
</dbReference>
<dbReference type="GO" id="GO:0000492">
    <property type="term" value="P:box C/D snoRNP assembly"/>
    <property type="evidence" value="ECO:0007669"/>
    <property type="project" value="TreeGrafter"/>
</dbReference>
<dbReference type="GO" id="GO:0000463">
    <property type="term" value="P:maturation of LSU-rRNA from tricistronic rRNA transcript (SSU-rRNA, 5.8S rRNA, LSU-rRNA)"/>
    <property type="evidence" value="ECO:0007669"/>
    <property type="project" value="TreeGrafter"/>
</dbReference>
<dbReference type="GO" id="GO:0048254">
    <property type="term" value="P:snoRNA localization"/>
    <property type="evidence" value="ECO:0007669"/>
    <property type="project" value="TreeGrafter"/>
</dbReference>
<dbReference type="CDD" id="cd23023">
    <property type="entry name" value="zf-HIT_BCD1"/>
    <property type="match status" value="1"/>
</dbReference>
<dbReference type="FunFam" id="3.30.60.190:FF:000001">
    <property type="entry name" value="box C/D snoRNA protein 1"/>
    <property type="match status" value="1"/>
</dbReference>
<dbReference type="Gene3D" id="3.30.60.190">
    <property type="match status" value="1"/>
</dbReference>
<dbReference type="InterPro" id="IPR051639">
    <property type="entry name" value="BCD1"/>
</dbReference>
<dbReference type="InterPro" id="IPR007529">
    <property type="entry name" value="Znf_HIT"/>
</dbReference>
<dbReference type="PANTHER" id="PTHR13483:SF3">
    <property type="entry name" value="BOX C_D SNORNA PROTEIN 1"/>
    <property type="match status" value="1"/>
</dbReference>
<dbReference type="PANTHER" id="PTHR13483">
    <property type="entry name" value="BOX C_D SNORNA PROTEIN 1-RELATED"/>
    <property type="match status" value="1"/>
</dbReference>
<dbReference type="Pfam" id="PF04438">
    <property type="entry name" value="zf-HIT"/>
    <property type="match status" value="1"/>
</dbReference>
<dbReference type="SUPFAM" id="SSF144232">
    <property type="entry name" value="HIT/MYND zinc finger-like"/>
    <property type="match status" value="1"/>
</dbReference>
<dbReference type="PROSITE" id="PS51083">
    <property type="entry name" value="ZF_HIT"/>
    <property type="match status" value="1"/>
</dbReference>
<gene>
    <name type="primary">ZNHIT6</name>
    <name type="synonym">BCD1</name>
</gene>
<sequence>MEFAAENEGKSGGGLHSVAEGVRLSPEPGREGVRDLAGAEEFGGGEEGKGLTGVKEIGDGEEGSRQRPEEIPMDLTVVKQEIIDWPGTEGRLAGQWVEQEVEDRPEVKDENAGVLEVKQETDSSLVVKEAKVGDLEVKEEVMDSSEVKEEKDNLEIKQEEKFVGQCIKEELMHGECVKEEKDFLKKEIVDDTKVKEEPPINHPVGCKRKLAMSRCETCGTEEAKYRCPRCMRYSCSLPCVKKHKAELTCNGVRDKTAYISIQQFTEMNLLSDYRFLEDVARTADHISRDAFLKRPISNKHMYFMKNRARRQGINLKLLPNGFTKRKENSTFFDKKKQQFCWHVKLQFPQSQAEYIEKRVPDDKTINEILKPYIDPEKSDPVIRQRLKAYIRSQTGVQILMKIEYMQQNLVRYYELDPYKSLLDNLRNKVIIEYPTLHVVLKGSNNDMKVLRQVKSESTKNLGNEN</sequence>
<evidence type="ECO:0000250" key="1">
    <source>
        <dbReference type="UniProtKB" id="Q9NWK9"/>
    </source>
</evidence>
<evidence type="ECO:0000255" key="2">
    <source>
        <dbReference type="PROSITE-ProRule" id="PRU00453"/>
    </source>
</evidence>
<evidence type="ECO:0000256" key="3">
    <source>
        <dbReference type="SAM" id="MobiDB-lite"/>
    </source>
</evidence>
<evidence type="ECO:0000305" key="4"/>
<organism>
    <name type="scientific">Pongo abelii</name>
    <name type="common">Sumatran orangutan</name>
    <name type="synonym">Pongo pygmaeus abelii</name>
    <dbReference type="NCBI Taxonomy" id="9601"/>
    <lineage>
        <taxon>Eukaryota</taxon>
        <taxon>Metazoa</taxon>
        <taxon>Chordata</taxon>
        <taxon>Craniata</taxon>
        <taxon>Vertebrata</taxon>
        <taxon>Euteleostomi</taxon>
        <taxon>Mammalia</taxon>
        <taxon>Eutheria</taxon>
        <taxon>Euarchontoglires</taxon>
        <taxon>Primates</taxon>
        <taxon>Haplorrhini</taxon>
        <taxon>Catarrhini</taxon>
        <taxon>Hominidae</taxon>
        <taxon>Pongo</taxon>
    </lineage>
</organism>
<accession>Q5RF97</accession>
<keyword id="KW-1017">Isopeptide bond</keyword>
<keyword id="KW-0479">Metal-binding</keyword>
<keyword id="KW-0597">Phosphoprotein</keyword>
<keyword id="KW-1185">Reference proteome</keyword>
<keyword id="KW-0690">Ribosome biogenesis</keyword>
<keyword id="KW-0832">Ubl conjugation</keyword>
<keyword id="KW-0862">Zinc</keyword>
<keyword id="KW-0863">Zinc-finger</keyword>
<comment type="function">
    <text evidence="1">Required for box C/D snoRNAs accumulation involved in snoRNA processing, snoRNA transport to the nucleolus and ribosome biogenesis.</text>
</comment>
<comment type="subunit">
    <text evidence="1">Interacts with FBL, SNU13, NOP58, NUFIP1, RUVBL1, RUVBL2 and TAF9 (By similarity). Interacts (via HIT-type zinc finger) with the RUVBL1/RUVBL2 complex in the presence of ADP (By similarity).</text>
</comment>
<comment type="similarity">
    <text evidence="4">Belongs to the BCD1 family.</text>
</comment>
<reference key="1">
    <citation type="submission" date="2004-11" db="EMBL/GenBank/DDBJ databases">
        <authorList>
            <consortium name="The German cDNA consortium"/>
        </authorList>
    </citation>
    <scope>NUCLEOTIDE SEQUENCE [LARGE SCALE MRNA]</scope>
    <source>
        <tissue>Kidney</tissue>
    </source>
</reference>
<proteinExistence type="evidence at transcript level"/>